<gene>
    <name type="primary">mus-81</name>
    <name type="ORF">NCU07457</name>
</gene>
<sequence>MAGDTGANPLFLGWVKEWWDTAREHNTKGAPTYKKAYNSLKACPLTFQHPSELQVLNGFGPTISQRLTDRLKQYCEENGLPMPKHPKRKRTLELESALAAAGAVQDEQPPPPKRARTARPYVPKLNSGAYALLMALSELGPKEFMDKTTLIAKAQPYSEHSFTVPTMANKSYTAWDSMKTLEQKELVWLRGLPSKRYSLTDEGWEVVKRMKEAQNLVDGVAGSANTSRNAIASGSGTSNPNRSENVNPNRQDSGVKRESRYTPLDLKPFVTTTATPERPLQPKPHTANSEYSIIIDSDDEDPKYDEEDRKPIIRDTTNRDYIDLVADGDSVPDESNLPHFTPIRLAPGSFTVELVLDTREVQAKNNRDHIQEELSKLGVRPVMRSLELGDVLWIAKCKQPGWLNRLGAEGDEVVLDYIVERKRLDDLIGSIKDGRFREQKYRLKRSGMKNVVYIIENYNIDMDIRRQYQDAMDTAMASIQVVNGYFLKKTDTIAESIRYLAAVTYMLKEIYESKPLFVIPTQVLTAKNYLPLVKHLREKEPSRGYYISYPAFASLVSKSEMMTLKDVFIKMLMCIRRLSGEKAIEIQKVWKTPYQLVKAFEACGSDENGKKKQKVLVMSMLSHLVDRRNVDKGLSERIADVWGFL</sequence>
<comment type="function">
    <text evidence="1">Interacts with eme-1 to form a DNA structure-specific endonuclease with substrate preference for branched DNA structures with a 5'-end at the branch nick. Typical substrates include 3'-flap structures, D-loops, replication forks and nicked Holliday junctions. May be required in mitosis for the processing of stalled or collapsed replication fork intermediates. May be required in meiosis for the repair of meiosis-specific double strand breaks subsequent to single-end invasion (SEI) (By similarity).</text>
</comment>
<comment type="cofactor">
    <cofactor evidence="1">
        <name>Mg(2+)</name>
        <dbReference type="ChEBI" id="CHEBI:18420"/>
    </cofactor>
</comment>
<comment type="subunit">
    <text evidence="1">Interacts with eme-1.</text>
</comment>
<comment type="subcellular location">
    <subcellularLocation>
        <location evidence="1">Nucleus</location>
    </subcellularLocation>
</comment>
<comment type="similarity">
    <text evidence="3">Belongs to the XPF family.</text>
</comment>
<feature type="chain" id="PRO_0000223646" description="Crossover junction endonuclease mus-81">
    <location>
        <begin position="1"/>
        <end position="645"/>
    </location>
</feature>
<feature type="domain" description="ERCC4">
    <location>
        <begin position="353"/>
        <end position="459"/>
    </location>
</feature>
<feature type="region of interest" description="Disordered" evidence="2">
    <location>
        <begin position="98"/>
        <end position="119"/>
    </location>
</feature>
<feature type="region of interest" description="Disordered" evidence="2">
    <location>
        <begin position="219"/>
        <end position="310"/>
    </location>
</feature>
<feature type="compositionally biased region" description="Polar residues" evidence="2">
    <location>
        <begin position="223"/>
        <end position="252"/>
    </location>
</feature>
<feature type="compositionally biased region" description="Acidic residues" evidence="2">
    <location>
        <begin position="296"/>
        <end position="305"/>
    </location>
</feature>
<dbReference type="EC" id="3.1.22.-"/>
<dbReference type="EMBL" id="CM002236">
    <property type="protein sequence ID" value="EAA34672.1"/>
    <property type="molecule type" value="Genomic_DNA"/>
</dbReference>
<dbReference type="RefSeq" id="XP_963908.1">
    <property type="nucleotide sequence ID" value="XM_958815.2"/>
</dbReference>
<dbReference type="SMR" id="Q7SD49"/>
<dbReference type="FunCoup" id="Q7SD49">
    <property type="interactions" value="181"/>
</dbReference>
<dbReference type="STRING" id="367110.Q7SD49"/>
<dbReference type="PaxDb" id="5141-EFNCRP00000007371"/>
<dbReference type="EnsemblFungi" id="EAA34672">
    <property type="protein sequence ID" value="EAA34672"/>
    <property type="gene ID" value="NCU07457"/>
</dbReference>
<dbReference type="GeneID" id="3880057"/>
<dbReference type="KEGG" id="ncr:NCU07457"/>
<dbReference type="VEuPathDB" id="FungiDB:NCU07457"/>
<dbReference type="HOGENOM" id="CLU_014329_1_0_1"/>
<dbReference type="InParanoid" id="Q7SD49"/>
<dbReference type="OMA" id="ELGDAMW"/>
<dbReference type="OrthoDB" id="5963188at2759"/>
<dbReference type="Proteomes" id="UP000001805">
    <property type="component" value="Chromosome 1, Linkage Group I"/>
</dbReference>
<dbReference type="GO" id="GO:0048476">
    <property type="term" value="C:Holliday junction resolvase complex"/>
    <property type="evidence" value="ECO:0000318"/>
    <property type="project" value="GO_Central"/>
</dbReference>
<dbReference type="GO" id="GO:0005634">
    <property type="term" value="C:nucleus"/>
    <property type="evidence" value="ECO:0000318"/>
    <property type="project" value="GO_Central"/>
</dbReference>
<dbReference type="GO" id="GO:0048257">
    <property type="term" value="F:3'-flap endonuclease activity"/>
    <property type="evidence" value="ECO:0000318"/>
    <property type="project" value="GO_Central"/>
</dbReference>
<dbReference type="GO" id="GO:0008821">
    <property type="term" value="F:crossover junction DNA endonuclease activity"/>
    <property type="evidence" value="ECO:0007669"/>
    <property type="project" value="EnsemblFungi"/>
</dbReference>
<dbReference type="GO" id="GO:0003677">
    <property type="term" value="F:DNA binding"/>
    <property type="evidence" value="ECO:0007669"/>
    <property type="project" value="InterPro"/>
</dbReference>
<dbReference type="GO" id="GO:0046872">
    <property type="term" value="F:metal ion binding"/>
    <property type="evidence" value="ECO:0007669"/>
    <property type="project" value="UniProtKB-KW"/>
</dbReference>
<dbReference type="GO" id="GO:0006308">
    <property type="term" value="P:DNA catabolic process"/>
    <property type="evidence" value="ECO:0007669"/>
    <property type="project" value="InterPro"/>
</dbReference>
<dbReference type="GO" id="GO:0000727">
    <property type="term" value="P:double-strand break repair via break-induced replication"/>
    <property type="evidence" value="ECO:0000318"/>
    <property type="project" value="GO_Central"/>
</dbReference>
<dbReference type="GO" id="GO:0033314">
    <property type="term" value="P:mitotic DNA replication checkpoint signaling"/>
    <property type="evidence" value="ECO:0007669"/>
    <property type="project" value="EnsemblFungi"/>
</dbReference>
<dbReference type="GO" id="GO:0031573">
    <property type="term" value="P:mitotic intra-S DNA damage checkpoint signaling"/>
    <property type="evidence" value="ECO:0000318"/>
    <property type="project" value="GO_Central"/>
</dbReference>
<dbReference type="GO" id="GO:0031297">
    <property type="term" value="P:replication fork processing"/>
    <property type="evidence" value="ECO:0007669"/>
    <property type="project" value="EnsemblFungi"/>
</dbReference>
<dbReference type="GO" id="GO:0000712">
    <property type="term" value="P:resolution of meiotic recombination intermediates"/>
    <property type="evidence" value="ECO:0000318"/>
    <property type="project" value="GO_Central"/>
</dbReference>
<dbReference type="CDD" id="cd21036">
    <property type="entry name" value="WH_MUS81"/>
    <property type="match status" value="1"/>
</dbReference>
<dbReference type="CDD" id="cd20074">
    <property type="entry name" value="XPF_nuclease_Mus81"/>
    <property type="match status" value="1"/>
</dbReference>
<dbReference type="FunFam" id="1.10.10.10:FF:000307">
    <property type="entry name" value="Crossover junction endonuclease MUS81"/>
    <property type="match status" value="1"/>
</dbReference>
<dbReference type="FunFam" id="3.40.50.10130:FF:000003">
    <property type="entry name" value="Crossover junction endonuclease MUS81"/>
    <property type="match status" value="1"/>
</dbReference>
<dbReference type="FunFam" id="1.10.150.670:FF:000006">
    <property type="entry name" value="Crossover junction endonuclease mus81"/>
    <property type="match status" value="1"/>
</dbReference>
<dbReference type="FunFam" id="1.10.150.110:FF:000001">
    <property type="entry name" value="Putative Crossover junction endonuclease MUS81"/>
    <property type="match status" value="1"/>
</dbReference>
<dbReference type="Gene3D" id="3.40.50.10130">
    <property type="match status" value="1"/>
</dbReference>
<dbReference type="Gene3D" id="1.10.150.670">
    <property type="entry name" value="Crossover junction endonuclease EME1, DNA-binding domain"/>
    <property type="match status" value="1"/>
</dbReference>
<dbReference type="Gene3D" id="1.10.150.110">
    <property type="entry name" value="DNA polymerase beta, N-terminal domain-like"/>
    <property type="match status" value="1"/>
</dbReference>
<dbReference type="Gene3D" id="1.10.10.10">
    <property type="entry name" value="Winged helix-like DNA-binding domain superfamily/Winged helix DNA-binding domain"/>
    <property type="match status" value="1"/>
</dbReference>
<dbReference type="InterPro" id="IPR027421">
    <property type="entry name" value="DNA_pol_lamdba_lyase_dom_sf"/>
</dbReference>
<dbReference type="InterPro" id="IPR042530">
    <property type="entry name" value="EME1/EME2_C"/>
</dbReference>
<dbReference type="InterPro" id="IPR006166">
    <property type="entry name" value="ERCC4_domain"/>
</dbReference>
<dbReference type="InterPro" id="IPR033309">
    <property type="entry name" value="Mus81"/>
</dbReference>
<dbReference type="InterPro" id="IPR011335">
    <property type="entry name" value="Restrct_endonuc-II-like"/>
</dbReference>
<dbReference type="InterPro" id="IPR036388">
    <property type="entry name" value="WH-like_DNA-bd_sf"/>
</dbReference>
<dbReference type="InterPro" id="IPR047417">
    <property type="entry name" value="WH_MUS81"/>
</dbReference>
<dbReference type="InterPro" id="IPR047416">
    <property type="entry name" value="XPF_nuclease_Mus81"/>
</dbReference>
<dbReference type="PANTHER" id="PTHR13451">
    <property type="entry name" value="CLASS II CROSSOVER JUNCTION ENDONUCLEASE MUS81"/>
    <property type="match status" value="1"/>
</dbReference>
<dbReference type="PANTHER" id="PTHR13451:SF0">
    <property type="entry name" value="CROSSOVER JUNCTION ENDONUCLEASE MUS81"/>
    <property type="match status" value="1"/>
</dbReference>
<dbReference type="Pfam" id="PF02732">
    <property type="entry name" value="ERCC4"/>
    <property type="match status" value="1"/>
</dbReference>
<dbReference type="Pfam" id="PF21136">
    <property type="entry name" value="MUS81-like_WH"/>
    <property type="match status" value="1"/>
</dbReference>
<dbReference type="SMART" id="SM00891">
    <property type="entry name" value="ERCC4"/>
    <property type="match status" value="1"/>
</dbReference>
<dbReference type="SUPFAM" id="SSF47802">
    <property type="entry name" value="DNA polymerase beta, N-terminal domain-like"/>
    <property type="match status" value="1"/>
</dbReference>
<dbReference type="SUPFAM" id="SSF52980">
    <property type="entry name" value="Restriction endonuclease-like"/>
    <property type="match status" value="1"/>
</dbReference>
<reference key="1">
    <citation type="journal article" date="2003" name="Nature">
        <title>The genome sequence of the filamentous fungus Neurospora crassa.</title>
        <authorList>
            <person name="Galagan J.E."/>
            <person name="Calvo S.E."/>
            <person name="Borkovich K.A."/>
            <person name="Selker E.U."/>
            <person name="Read N.D."/>
            <person name="Jaffe D.B."/>
            <person name="FitzHugh W."/>
            <person name="Ma L.-J."/>
            <person name="Smirnov S."/>
            <person name="Purcell S."/>
            <person name="Rehman B."/>
            <person name="Elkins T."/>
            <person name="Engels R."/>
            <person name="Wang S."/>
            <person name="Nielsen C.B."/>
            <person name="Butler J."/>
            <person name="Endrizzi M."/>
            <person name="Qui D."/>
            <person name="Ianakiev P."/>
            <person name="Bell-Pedersen D."/>
            <person name="Nelson M.A."/>
            <person name="Werner-Washburne M."/>
            <person name="Selitrennikoff C.P."/>
            <person name="Kinsey J.A."/>
            <person name="Braun E.L."/>
            <person name="Zelter A."/>
            <person name="Schulte U."/>
            <person name="Kothe G.O."/>
            <person name="Jedd G."/>
            <person name="Mewes H.-W."/>
            <person name="Staben C."/>
            <person name="Marcotte E."/>
            <person name="Greenberg D."/>
            <person name="Roy A."/>
            <person name="Foley K."/>
            <person name="Naylor J."/>
            <person name="Stange-Thomann N."/>
            <person name="Barrett R."/>
            <person name="Gnerre S."/>
            <person name="Kamal M."/>
            <person name="Kamvysselis M."/>
            <person name="Mauceli E.W."/>
            <person name="Bielke C."/>
            <person name="Rudd S."/>
            <person name="Frishman D."/>
            <person name="Krystofova S."/>
            <person name="Rasmussen C."/>
            <person name="Metzenberg R.L."/>
            <person name="Perkins D.D."/>
            <person name="Kroken S."/>
            <person name="Cogoni C."/>
            <person name="Macino G."/>
            <person name="Catcheside D.E.A."/>
            <person name="Li W."/>
            <person name="Pratt R.J."/>
            <person name="Osmani S.A."/>
            <person name="DeSouza C.P.C."/>
            <person name="Glass N.L."/>
            <person name="Orbach M.J."/>
            <person name="Berglund J.A."/>
            <person name="Voelker R."/>
            <person name="Yarden O."/>
            <person name="Plamann M."/>
            <person name="Seiler S."/>
            <person name="Dunlap J.C."/>
            <person name="Radford A."/>
            <person name="Aramayo R."/>
            <person name="Natvig D.O."/>
            <person name="Alex L.A."/>
            <person name="Mannhaupt G."/>
            <person name="Ebbole D.J."/>
            <person name="Freitag M."/>
            <person name="Paulsen I."/>
            <person name="Sachs M.S."/>
            <person name="Lander E.S."/>
            <person name="Nusbaum C."/>
            <person name="Birren B.W."/>
        </authorList>
    </citation>
    <scope>NUCLEOTIDE SEQUENCE [LARGE SCALE GENOMIC DNA]</scope>
    <source>
        <strain>ATCC 24698 / 74-OR23-1A / CBS 708.71 / DSM 1257 / FGSC 987</strain>
    </source>
</reference>
<accession>Q7SD49</accession>
<organism>
    <name type="scientific">Neurospora crassa (strain ATCC 24698 / 74-OR23-1A / CBS 708.71 / DSM 1257 / FGSC 987)</name>
    <dbReference type="NCBI Taxonomy" id="367110"/>
    <lineage>
        <taxon>Eukaryota</taxon>
        <taxon>Fungi</taxon>
        <taxon>Dikarya</taxon>
        <taxon>Ascomycota</taxon>
        <taxon>Pezizomycotina</taxon>
        <taxon>Sordariomycetes</taxon>
        <taxon>Sordariomycetidae</taxon>
        <taxon>Sordariales</taxon>
        <taxon>Sordariaceae</taxon>
        <taxon>Neurospora</taxon>
    </lineage>
</organism>
<keyword id="KW-0227">DNA damage</keyword>
<keyword id="KW-0233">DNA recombination</keyword>
<keyword id="KW-0234">DNA repair</keyword>
<keyword id="KW-0255">Endonuclease</keyword>
<keyword id="KW-0378">Hydrolase</keyword>
<keyword id="KW-0460">Magnesium</keyword>
<keyword id="KW-0469">Meiosis</keyword>
<keyword id="KW-0479">Metal-binding</keyword>
<keyword id="KW-0540">Nuclease</keyword>
<keyword id="KW-0539">Nucleus</keyword>
<keyword id="KW-1185">Reference proteome</keyword>
<name>MUS81_NEUCR</name>
<proteinExistence type="inferred from homology"/>
<protein>
    <recommendedName>
        <fullName>Crossover junction endonuclease mus-81</fullName>
        <ecNumber>3.1.22.-</ecNumber>
    </recommendedName>
</protein>
<evidence type="ECO:0000250" key="1"/>
<evidence type="ECO:0000256" key="2">
    <source>
        <dbReference type="SAM" id="MobiDB-lite"/>
    </source>
</evidence>
<evidence type="ECO:0000305" key="3"/>